<name>IXTPA_BORPE</name>
<dbReference type="EC" id="3.6.1.66" evidence="1"/>
<dbReference type="EMBL" id="BX640415">
    <property type="protein sequence ID" value="CAE41882.1"/>
    <property type="molecule type" value="Genomic_DNA"/>
</dbReference>
<dbReference type="RefSeq" id="NP_880326.1">
    <property type="nucleotide sequence ID" value="NC_002929.2"/>
</dbReference>
<dbReference type="SMR" id="Q7VXX8"/>
<dbReference type="STRING" id="257313.BP1593"/>
<dbReference type="PaxDb" id="257313-BP1593"/>
<dbReference type="KEGG" id="bpe:BP1593"/>
<dbReference type="PATRIC" id="fig|257313.5.peg.1710"/>
<dbReference type="eggNOG" id="COG0127">
    <property type="taxonomic scope" value="Bacteria"/>
</dbReference>
<dbReference type="HOGENOM" id="CLU_082080_0_3_4"/>
<dbReference type="Proteomes" id="UP000002676">
    <property type="component" value="Chromosome"/>
</dbReference>
<dbReference type="GO" id="GO:0005829">
    <property type="term" value="C:cytosol"/>
    <property type="evidence" value="ECO:0007669"/>
    <property type="project" value="TreeGrafter"/>
</dbReference>
<dbReference type="GO" id="GO:0035870">
    <property type="term" value="F:dITP diphosphatase activity"/>
    <property type="evidence" value="ECO:0007669"/>
    <property type="project" value="RHEA"/>
</dbReference>
<dbReference type="GO" id="GO:0036220">
    <property type="term" value="F:ITP diphosphatase activity"/>
    <property type="evidence" value="ECO:0007669"/>
    <property type="project" value="UniProtKB-EC"/>
</dbReference>
<dbReference type="GO" id="GO:0046872">
    <property type="term" value="F:metal ion binding"/>
    <property type="evidence" value="ECO:0007669"/>
    <property type="project" value="UniProtKB-KW"/>
</dbReference>
<dbReference type="GO" id="GO:0000166">
    <property type="term" value="F:nucleotide binding"/>
    <property type="evidence" value="ECO:0007669"/>
    <property type="project" value="UniProtKB-KW"/>
</dbReference>
<dbReference type="GO" id="GO:0017111">
    <property type="term" value="F:ribonucleoside triphosphate phosphatase activity"/>
    <property type="evidence" value="ECO:0007669"/>
    <property type="project" value="InterPro"/>
</dbReference>
<dbReference type="GO" id="GO:0036222">
    <property type="term" value="F:XTP diphosphatase activity"/>
    <property type="evidence" value="ECO:0007669"/>
    <property type="project" value="RHEA"/>
</dbReference>
<dbReference type="GO" id="GO:0009117">
    <property type="term" value="P:nucleotide metabolic process"/>
    <property type="evidence" value="ECO:0007669"/>
    <property type="project" value="UniProtKB-KW"/>
</dbReference>
<dbReference type="GO" id="GO:0009146">
    <property type="term" value="P:purine nucleoside triphosphate catabolic process"/>
    <property type="evidence" value="ECO:0007669"/>
    <property type="project" value="UniProtKB-UniRule"/>
</dbReference>
<dbReference type="CDD" id="cd00515">
    <property type="entry name" value="HAM1"/>
    <property type="match status" value="1"/>
</dbReference>
<dbReference type="FunFam" id="3.90.950.10:FF:000001">
    <property type="entry name" value="dITP/XTP pyrophosphatase"/>
    <property type="match status" value="1"/>
</dbReference>
<dbReference type="Gene3D" id="3.90.950.10">
    <property type="match status" value="1"/>
</dbReference>
<dbReference type="HAMAP" id="MF_01405">
    <property type="entry name" value="Non_canon_purine_NTPase"/>
    <property type="match status" value="1"/>
</dbReference>
<dbReference type="InterPro" id="IPR020922">
    <property type="entry name" value="dITP/XTP_pyrophosphatase"/>
</dbReference>
<dbReference type="InterPro" id="IPR029001">
    <property type="entry name" value="ITPase-like_fam"/>
</dbReference>
<dbReference type="InterPro" id="IPR002637">
    <property type="entry name" value="RdgB/HAM1"/>
</dbReference>
<dbReference type="NCBIfam" id="TIGR00042">
    <property type="entry name" value="RdgB/HAM1 family non-canonical purine NTP pyrophosphatase"/>
    <property type="match status" value="1"/>
</dbReference>
<dbReference type="PANTHER" id="PTHR11067:SF9">
    <property type="entry name" value="INOSINE TRIPHOSPHATE PYROPHOSPHATASE"/>
    <property type="match status" value="1"/>
</dbReference>
<dbReference type="PANTHER" id="PTHR11067">
    <property type="entry name" value="INOSINE TRIPHOSPHATE PYROPHOSPHATASE/HAM1 PROTEIN"/>
    <property type="match status" value="1"/>
</dbReference>
<dbReference type="Pfam" id="PF01725">
    <property type="entry name" value="Ham1p_like"/>
    <property type="match status" value="1"/>
</dbReference>
<dbReference type="SUPFAM" id="SSF52972">
    <property type="entry name" value="ITPase-like"/>
    <property type="match status" value="1"/>
</dbReference>
<comment type="function">
    <text evidence="1">Pyrophosphatase that catalyzes the hydrolysis of nucleoside triphosphates to their monophosphate derivatives, with a high preference for the non-canonical purine nucleotides XTP (xanthosine triphosphate), dITP (deoxyinosine triphosphate) and ITP. Seems to function as a house-cleaning enzyme that removes non-canonical purine nucleotides from the nucleotide pool, thus preventing their incorporation into DNA/RNA and avoiding chromosomal lesions.</text>
</comment>
<comment type="catalytic activity">
    <reaction evidence="1">
        <text>XTP + H2O = XMP + diphosphate + H(+)</text>
        <dbReference type="Rhea" id="RHEA:28610"/>
        <dbReference type="ChEBI" id="CHEBI:15377"/>
        <dbReference type="ChEBI" id="CHEBI:15378"/>
        <dbReference type="ChEBI" id="CHEBI:33019"/>
        <dbReference type="ChEBI" id="CHEBI:57464"/>
        <dbReference type="ChEBI" id="CHEBI:61314"/>
        <dbReference type="EC" id="3.6.1.66"/>
    </reaction>
</comment>
<comment type="catalytic activity">
    <reaction evidence="1">
        <text>dITP + H2O = dIMP + diphosphate + H(+)</text>
        <dbReference type="Rhea" id="RHEA:28342"/>
        <dbReference type="ChEBI" id="CHEBI:15377"/>
        <dbReference type="ChEBI" id="CHEBI:15378"/>
        <dbReference type="ChEBI" id="CHEBI:33019"/>
        <dbReference type="ChEBI" id="CHEBI:61194"/>
        <dbReference type="ChEBI" id="CHEBI:61382"/>
        <dbReference type="EC" id="3.6.1.66"/>
    </reaction>
</comment>
<comment type="catalytic activity">
    <reaction evidence="1">
        <text>ITP + H2O = IMP + diphosphate + H(+)</text>
        <dbReference type="Rhea" id="RHEA:29399"/>
        <dbReference type="ChEBI" id="CHEBI:15377"/>
        <dbReference type="ChEBI" id="CHEBI:15378"/>
        <dbReference type="ChEBI" id="CHEBI:33019"/>
        <dbReference type="ChEBI" id="CHEBI:58053"/>
        <dbReference type="ChEBI" id="CHEBI:61402"/>
        <dbReference type="EC" id="3.6.1.66"/>
    </reaction>
</comment>
<comment type="cofactor">
    <cofactor evidence="1">
        <name>Mg(2+)</name>
        <dbReference type="ChEBI" id="CHEBI:18420"/>
    </cofactor>
    <text evidence="1">Binds 1 Mg(2+) ion per subunit.</text>
</comment>
<comment type="subunit">
    <text evidence="1">Homodimer.</text>
</comment>
<comment type="similarity">
    <text evidence="1">Belongs to the HAM1 NTPase family.</text>
</comment>
<proteinExistence type="inferred from homology"/>
<feature type="chain" id="PRO_0000178139" description="dITP/XTP pyrophosphatase">
    <location>
        <begin position="1"/>
        <end position="213"/>
    </location>
</feature>
<feature type="active site" description="Proton acceptor" evidence="1">
    <location>
        <position position="78"/>
    </location>
</feature>
<feature type="binding site" evidence="1">
    <location>
        <begin position="17"/>
        <end position="22"/>
    </location>
    <ligand>
        <name>substrate</name>
    </ligand>
</feature>
<feature type="binding site" evidence="1">
    <location>
        <position position="49"/>
    </location>
    <ligand>
        <name>Mg(2+)</name>
        <dbReference type="ChEBI" id="CHEBI:18420"/>
    </ligand>
</feature>
<feature type="binding site" evidence="1">
    <location>
        <position position="78"/>
    </location>
    <ligand>
        <name>Mg(2+)</name>
        <dbReference type="ChEBI" id="CHEBI:18420"/>
    </ligand>
</feature>
<feature type="binding site" evidence="1">
    <location>
        <position position="79"/>
    </location>
    <ligand>
        <name>substrate</name>
    </ligand>
</feature>
<feature type="binding site" evidence="1">
    <location>
        <begin position="164"/>
        <end position="167"/>
    </location>
    <ligand>
        <name>substrate</name>
    </ligand>
</feature>
<feature type="binding site" evidence="1">
    <location>
        <position position="187"/>
    </location>
    <ligand>
        <name>substrate</name>
    </ligand>
</feature>
<feature type="binding site" evidence="1">
    <location>
        <begin position="192"/>
        <end position="193"/>
    </location>
    <ligand>
        <name>substrate</name>
    </ligand>
</feature>
<reference key="1">
    <citation type="journal article" date="2003" name="Nat. Genet.">
        <title>Comparative analysis of the genome sequences of Bordetella pertussis, Bordetella parapertussis and Bordetella bronchiseptica.</title>
        <authorList>
            <person name="Parkhill J."/>
            <person name="Sebaihia M."/>
            <person name="Preston A."/>
            <person name="Murphy L.D."/>
            <person name="Thomson N.R."/>
            <person name="Harris D.E."/>
            <person name="Holden M.T.G."/>
            <person name="Churcher C.M."/>
            <person name="Bentley S.D."/>
            <person name="Mungall K.L."/>
            <person name="Cerdeno-Tarraga A.-M."/>
            <person name="Temple L."/>
            <person name="James K.D."/>
            <person name="Harris B."/>
            <person name="Quail M.A."/>
            <person name="Achtman M."/>
            <person name="Atkin R."/>
            <person name="Baker S."/>
            <person name="Basham D."/>
            <person name="Bason N."/>
            <person name="Cherevach I."/>
            <person name="Chillingworth T."/>
            <person name="Collins M."/>
            <person name="Cronin A."/>
            <person name="Davis P."/>
            <person name="Doggett J."/>
            <person name="Feltwell T."/>
            <person name="Goble A."/>
            <person name="Hamlin N."/>
            <person name="Hauser H."/>
            <person name="Holroyd S."/>
            <person name="Jagels K."/>
            <person name="Leather S."/>
            <person name="Moule S."/>
            <person name="Norberczak H."/>
            <person name="O'Neil S."/>
            <person name="Ormond D."/>
            <person name="Price C."/>
            <person name="Rabbinowitsch E."/>
            <person name="Rutter S."/>
            <person name="Sanders M."/>
            <person name="Saunders D."/>
            <person name="Seeger K."/>
            <person name="Sharp S."/>
            <person name="Simmonds M."/>
            <person name="Skelton J."/>
            <person name="Squares R."/>
            <person name="Squares S."/>
            <person name="Stevens K."/>
            <person name="Unwin L."/>
            <person name="Whitehead S."/>
            <person name="Barrell B.G."/>
            <person name="Maskell D.J."/>
        </authorList>
    </citation>
    <scope>NUCLEOTIDE SEQUENCE [LARGE SCALE GENOMIC DNA]</scope>
    <source>
        <strain>Tohama I / ATCC BAA-589 / NCTC 13251</strain>
    </source>
</reference>
<accession>Q7VXX8</accession>
<keyword id="KW-0378">Hydrolase</keyword>
<keyword id="KW-0460">Magnesium</keyword>
<keyword id="KW-0479">Metal-binding</keyword>
<keyword id="KW-0546">Nucleotide metabolism</keyword>
<keyword id="KW-0547">Nucleotide-binding</keyword>
<keyword id="KW-1185">Reference proteome</keyword>
<organism>
    <name type="scientific">Bordetella pertussis (strain Tohama I / ATCC BAA-589 / NCTC 13251)</name>
    <dbReference type="NCBI Taxonomy" id="257313"/>
    <lineage>
        <taxon>Bacteria</taxon>
        <taxon>Pseudomonadati</taxon>
        <taxon>Pseudomonadota</taxon>
        <taxon>Betaproteobacteria</taxon>
        <taxon>Burkholderiales</taxon>
        <taxon>Alcaligenaceae</taxon>
        <taxon>Bordetella</taxon>
    </lineage>
</organism>
<protein>
    <recommendedName>
        <fullName evidence="1">dITP/XTP pyrophosphatase</fullName>
        <ecNumber evidence="1">3.6.1.66</ecNumber>
    </recommendedName>
    <alternativeName>
        <fullName evidence="1">Non-canonical purine NTP pyrophosphatase</fullName>
    </alternativeName>
    <alternativeName>
        <fullName evidence="1">Non-standard purine NTP pyrophosphatase</fullName>
    </alternativeName>
    <alternativeName>
        <fullName evidence="1">Nucleoside-triphosphate diphosphatase</fullName>
    </alternativeName>
    <alternativeName>
        <fullName evidence="1">Nucleoside-triphosphate pyrophosphatase</fullName>
        <shortName evidence="1">NTPase</shortName>
    </alternativeName>
</protein>
<gene>
    <name type="ordered locus">BP1593</name>
</gene>
<evidence type="ECO:0000255" key="1">
    <source>
        <dbReference type="HAMAP-Rule" id="MF_01405"/>
    </source>
</evidence>
<sequence>MSAEILNPNLRRVVLASNNAGKLREFSALFAPLGIELVPQSELGVSEAEEPHATFVENALAKARHASRHTGLPALADDSGLCVVALGGAPGVHSARYAQQPGGARSDAANNALLVRELAAAGDRRAWYVALLALVRTENDPCPLIGEGLWHGEIVDAPAGEHGFGYDPHFYLPQQGCTAAQLAPEHKNRISHRAQALAQLLDKLRATGPVDRP</sequence>